<sequence>MNIRPLHDRVIVKRKEVETKSAGGIVLTGSAAAKSTRGEVLAVGNGRILENGEVKPLDVKVGDIVIFNDGYGVKSEKIDNEEVLIMSESDILAIVEA</sequence>
<gene>
    <name evidence="1" type="primary">groES</name>
    <name evidence="1" type="synonym">groS</name>
    <name type="ordered locus">BWG_3855</name>
</gene>
<organism>
    <name type="scientific">Escherichia coli (strain K12 / MC4100 / BW2952)</name>
    <dbReference type="NCBI Taxonomy" id="595496"/>
    <lineage>
        <taxon>Bacteria</taxon>
        <taxon>Pseudomonadati</taxon>
        <taxon>Pseudomonadota</taxon>
        <taxon>Gammaproteobacteria</taxon>
        <taxon>Enterobacterales</taxon>
        <taxon>Enterobacteriaceae</taxon>
        <taxon>Escherichia</taxon>
    </lineage>
</organism>
<protein>
    <recommendedName>
        <fullName evidence="1">Co-chaperonin GroES</fullName>
    </recommendedName>
    <alternativeName>
        <fullName evidence="1">10 kDa chaperonin</fullName>
    </alternativeName>
    <alternativeName>
        <fullName evidence="1">Chaperonin-10</fullName>
        <shortName evidence="1">Cpn10</shortName>
    </alternativeName>
</protein>
<accession>C5A1D4</accession>
<dbReference type="EMBL" id="CP001396">
    <property type="protein sequence ID" value="ACR62649.1"/>
    <property type="molecule type" value="Genomic_DNA"/>
</dbReference>
<dbReference type="RefSeq" id="WP_001026276.1">
    <property type="nucleotide sequence ID" value="NC_012759.1"/>
</dbReference>
<dbReference type="SMR" id="C5A1D4"/>
<dbReference type="KEGG" id="ebw:BWG_3855"/>
<dbReference type="HOGENOM" id="CLU_132825_1_1_6"/>
<dbReference type="GO" id="GO:0005737">
    <property type="term" value="C:cytoplasm"/>
    <property type="evidence" value="ECO:0007669"/>
    <property type="project" value="UniProtKB-SubCell"/>
</dbReference>
<dbReference type="GO" id="GO:0005524">
    <property type="term" value="F:ATP binding"/>
    <property type="evidence" value="ECO:0007669"/>
    <property type="project" value="InterPro"/>
</dbReference>
<dbReference type="GO" id="GO:0046872">
    <property type="term" value="F:metal ion binding"/>
    <property type="evidence" value="ECO:0007669"/>
    <property type="project" value="TreeGrafter"/>
</dbReference>
<dbReference type="GO" id="GO:0044183">
    <property type="term" value="F:protein folding chaperone"/>
    <property type="evidence" value="ECO:0007669"/>
    <property type="project" value="InterPro"/>
</dbReference>
<dbReference type="GO" id="GO:0051087">
    <property type="term" value="F:protein-folding chaperone binding"/>
    <property type="evidence" value="ECO:0007669"/>
    <property type="project" value="TreeGrafter"/>
</dbReference>
<dbReference type="GO" id="GO:0051082">
    <property type="term" value="F:unfolded protein binding"/>
    <property type="evidence" value="ECO:0007669"/>
    <property type="project" value="TreeGrafter"/>
</dbReference>
<dbReference type="GO" id="GO:0051085">
    <property type="term" value="P:chaperone cofactor-dependent protein refolding"/>
    <property type="evidence" value="ECO:0007669"/>
    <property type="project" value="TreeGrafter"/>
</dbReference>
<dbReference type="CDD" id="cd00320">
    <property type="entry name" value="cpn10"/>
    <property type="match status" value="1"/>
</dbReference>
<dbReference type="FunFam" id="2.30.33.40:FF:000001">
    <property type="entry name" value="10 kDa chaperonin"/>
    <property type="match status" value="1"/>
</dbReference>
<dbReference type="Gene3D" id="2.30.33.40">
    <property type="entry name" value="GroES chaperonin"/>
    <property type="match status" value="1"/>
</dbReference>
<dbReference type="HAMAP" id="MF_00580">
    <property type="entry name" value="CH10"/>
    <property type="match status" value="1"/>
</dbReference>
<dbReference type="InterPro" id="IPR020818">
    <property type="entry name" value="Chaperonin_GroES"/>
</dbReference>
<dbReference type="InterPro" id="IPR037124">
    <property type="entry name" value="Chaperonin_GroES_sf"/>
</dbReference>
<dbReference type="InterPro" id="IPR018369">
    <property type="entry name" value="Chaprnonin_Cpn10_CS"/>
</dbReference>
<dbReference type="InterPro" id="IPR011032">
    <property type="entry name" value="GroES-like_sf"/>
</dbReference>
<dbReference type="NCBIfam" id="NF001526">
    <property type="entry name" value="PRK00364.1-1"/>
    <property type="match status" value="1"/>
</dbReference>
<dbReference type="NCBIfam" id="NF001527">
    <property type="entry name" value="PRK00364.1-2"/>
    <property type="match status" value="1"/>
</dbReference>
<dbReference type="NCBIfam" id="NF001531">
    <property type="entry name" value="PRK00364.2-2"/>
    <property type="match status" value="1"/>
</dbReference>
<dbReference type="PANTHER" id="PTHR10772">
    <property type="entry name" value="10 KDA HEAT SHOCK PROTEIN"/>
    <property type="match status" value="1"/>
</dbReference>
<dbReference type="PANTHER" id="PTHR10772:SF58">
    <property type="entry name" value="CO-CHAPERONIN GROES"/>
    <property type="match status" value="1"/>
</dbReference>
<dbReference type="Pfam" id="PF00166">
    <property type="entry name" value="Cpn10"/>
    <property type="match status" value="1"/>
</dbReference>
<dbReference type="PRINTS" id="PR00297">
    <property type="entry name" value="CHAPERONIN10"/>
</dbReference>
<dbReference type="SMART" id="SM00883">
    <property type="entry name" value="Cpn10"/>
    <property type="match status" value="1"/>
</dbReference>
<dbReference type="SUPFAM" id="SSF50129">
    <property type="entry name" value="GroES-like"/>
    <property type="match status" value="1"/>
</dbReference>
<dbReference type="PROSITE" id="PS00681">
    <property type="entry name" value="CHAPERONINS_CPN10"/>
    <property type="match status" value="1"/>
</dbReference>
<keyword id="KW-0143">Chaperone</keyword>
<keyword id="KW-0963">Cytoplasm</keyword>
<feature type="chain" id="PRO_1000212112" description="Co-chaperonin GroES">
    <location>
        <begin position="1"/>
        <end position="97"/>
    </location>
</feature>
<name>CH10_ECOBW</name>
<evidence type="ECO:0000255" key="1">
    <source>
        <dbReference type="HAMAP-Rule" id="MF_00580"/>
    </source>
</evidence>
<comment type="function">
    <text evidence="1">Together with the chaperonin GroEL, plays an essential role in assisting protein folding. The GroEL-GroES system forms a nano-cage that allows encapsulation of the non-native substrate proteins and provides a physical environment optimized to promote and accelerate protein folding. GroES binds to the apical surface of the GroEL ring, thereby capping the opening of the GroEL channel.</text>
</comment>
<comment type="subunit">
    <text evidence="1">Heptamer of 7 subunits arranged in a ring. Interacts with the chaperonin GroEL.</text>
</comment>
<comment type="subcellular location">
    <subcellularLocation>
        <location evidence="1">Cytoplasm</location>
    </subcellularLocation>
</comment>
<comment type="similarity">
    <text evidence="1">Belongs to the GroES chaperonin family.</text>
</comment>
<proteinExistence type="inferred from homology"/>
<reference key="1">
    <citation type="journal article" date="2009" name="J. Bacteriol.">
        <title>Genomic sequencing reveals regulatory mutations and recombinational events in the widely used MC4100 lineage of Escherichia coli K-12.</title>
        <authorList>
            <person name="Ferenci T."/>
            <person name="Zhou Z."/>
            <person name="Betteridge T."/>
            <person name="Ren Y."/>
            <person name="Liu Y."/>
            <person name="Feng L."/>
            <person name="Reeves P.R."/>
            <person name="Wang L."/>
        </authorList>
    </citation>
    <scope>NUCLEOTIDE SEQUENCE [LARGE SCALE GENOMIC DNA]</scope>
    <source>
        <strain>K12 / MC4100 / BW2952</strain>
    </source>
</reference>